<proteinExistence type="inferred from homology"/>
<gene>
    <name type="primary">RAX2</name>
    <name type="synonym">RAXL1</name>
</gene>
<name>RAX2_PANTR</name>
<keyword id="KW-0238">DNA-binding</keyword>
<keyword id="KW-0371">Homeobox</keyword>
<keyword id="KW-0539">Nucleus</keyword>
<keyword id="KW-1185">Reference proteome</keyword>
<keyword id="KW-0716">Sensory transduction</keyword>
<keyword id="KW-0804">Transcription</keyword>
<keyword id="KW-0805">Transcription regulation</keyword>
<keyword id="KW-0844">Vision</keyword>
<protein>
    <recommendedName>
        <fullName>Retina and anterior neural fold homeobox protein 2</fullName>
    </recommendedName>
    <alternativeName>
        <fullName>Retina and anterior neural fold homeobox-like protein 1</fullName>
    </alternativeName>
</protein>
<evidence type="ECO:0000250" key="1"/>
<evidence type="ECO:0000255" key="2">
    <source>
        <dbReference type="PROSITE-ProRule" id="PRU00108"/>
    </source>
</evidence>
<evidence type="ECO:0000256" key="3">
    <source>
        <dbReference type="SAM" id="MobiDB-lite"/>
    </source>
</evidence>
<accession>A2T711</accession>
<feature type="chain" id="PRO_0000285528" description="Retina and anterior neural fold homeobox protein 2">
    <location>
        <begin position="1"/>
        <end position="184"/>
    </location>
</feature>
<feature type="DNA-binding region" description="Homeobox" evidence="2">
    <location>
        <begin position="27"/>
        <end position="86"/>
    </location>
</feature>
<feature type="region of interest" description="Disordered" evidence="3">
    <location>
        <begin position="1"/>
        <end position="33"/>
    </location>
</feature>
<feature type="compositionally biased region" description="Low complexity" evidence="3">
    <location>
        <begin position="1"/>
        <end position="10"/>
    </location>
</feature>
<comment type="function">
    <text evidence="1">May be involved in modulating the expression of photoreceptor specific genes. Binds to the Ret-1 and Bat-1 element within the rhodopsin promoter (By similarity).</text>
</comment>
<comment type="subunit">
    <text evidence="1">Interacts with CRX.</text>
</comment>
<comment type="subcellular location">
    <subcellularLocation>
        <location evidence="2">Nucleus</location>
    </subcellularLocation>
</comment>
<comment type="domain">
    <text evidence="1">The Homeobox transactivates the Ret-1 element in the presence of CRX and NRL.</text>
</comment>
<reference key="1">
    <citation type="submission" date="2006-08" db="EMBL/GenBank/DDBJ databases">
        <title>Positive selection in transcription factor genes on the human lineage.</title>
        <authorList>
            <person name="Nickel G.C."/>
            <person name="Tefft D.L."/>
            <person name="Trevarthen K."/>
            <person name="Funt J."/>
            <person name="Adams M.D."/>
        </authorList>
    </citation>
    <scope>NUCLEOTIDE SEQUENCE [GENOMIC DNA]</scope>
</reference>
<dbReference type="EMBL" id="DQ977350">
    <property type="protein sequence ID" value="ABM91966.1"/>
    <property type="molecule type" value="Genomic_DNA"/>
</dbReference>
<dbReference type="RefSeq" id="NP_001074956.1">
    <property type="nucleotide sequence ID" value="NM_001081487.1"/>
</dbReference>
<dbReference type="RefSeq" id="XP_009432636.1">
    <property type="nucleotide sequence ID" value="XM_009434361.5"/>
</dbReference>
<dbReference type="SMR" id="A2T711"/>
<dbReference type="FunCoup" id="A2T711">
    <property type="interactions" value="120"/>
</dbReference>
<dbReference type="STRING" id="9598.ENSPTRP00000017466"/>
<dbReference type="PaxDb" id="9598-ENSPTRP00000017466"/>
<dbReference type="Ensembl" id="ENSPTRT00000018872.5">
    <property type="protein sequence ID" value="ENSPTRP00000017466.4"/>
    <property type="gene ID" value="ENSPTRG00000010277.7"/>
</dbReference>
<dbReference type="GeneID" id="468668"/>
<dbReference type="KEGG" id="ptr:468668"/>
<dbReference type="CTD" id="84839"/>
<dbReference type="VGNC" id="VGNC:2273">
    <property type="gene designation" value="RAX2"/>
</dbReference>
<dbReference type="eggNOG" id="KOG0490">
    <property type="taxonomic scope" value="Eukaryota"/>
</dbReference>
<dbReference type="GeneTree" id="ENSGT00940000163572"/>
<dbReference type="HOGENOM" id="CLU_047013_4_0_1"/>
<dbReference type="InParanoid" id="A2T711"/>
<dbReference type="OMA" id="TLDRTWQ"/>
<dbReference type="OrthoDB" id="17235at9604"/>
<dbReference type="TreeFam" id="TF315976"/>
<dbReference type="Proteomes" id="UP000002277">
    <property type="component" value="Chromosome 19"/>
</dbReference>
<dbReference type="Bgee" id="ENSPTRG00000010277">
    <property type="expression patterns" value="Expressed in primary visual cortex and 5 other cell types or tissues"/>
</dbReference>
<dbReference type="GO" id="GO:0005634">
    <property type="term" value="C:nucleus"/>
    <property type="evidence" value="ECO:0007669"/>
    <property type="project" value="UniProtKB-SubCell"/>
</dbReference>
<dbReference type="GO" id="GO:0001228">
    <property type="term" value="F:DNA-binding transcription activator activity, RNA polymerase II-specific"/>
    <property type="evidence" value="ECO:0007669"/>
    <property type="project" value="Ensembl"/>
</dbReference>
<dbReference type="GO" id="GO:0000981">
    <property type="term" value="F:DNA-binding transcription factor activity, RNA polymerase II-specific"/>
    <property type="evidence" value="ECO:0000318"/>
    <property type="project" value="GO_Central"/>
</dbReference>
<dbReference type="GO" id="GO:0000978">
    <property type="term" value="F:RNA polymerase II cis-regulatory region sequence-specific DNA binding"/>
    <property type="evidence" value="ECO:0000318"/>
    <property type="project" value="GO_Central"/>
</dbReference>
<dbReference type="GO" id="GO:0006357">
    <property type="term" value="P:regulation of transcription by RNA polymerase II"/>
    <property type="evidence" value="ECO:0000318"/>
    <property type="project" value="GO_Central"/>
</dbReference>
<dbReference type="GO" id="GO:0007601">
    <property type="term" value="P:visual perception"/>
    <property type="evidence" value="ECO:0007669"/>
    <property type="project" value="UniProtKB-KW"/>
</dbReference>
<dbReference type="CDD" id="cd00086">
    <property type="entry name" value="homeodomain"/>
    <property type="match status" value="1"/>
</dbReference>
<dbReference type="FunFam" id="1.10.10.60:FF:000071">
    <property type="entry name" value="Retinal homeobox gene 2"/>
    <property type="match status" value="1"/>
</dbReference>
<dbReference type="Gene3D" id="1.10.10.60">
    <property type="entry name" value="Homeodomain-like"/>
    <property type="match status" value="1"/>
</dbReference>
<dbReference type="InterPro" id="IPR001356">
    <property type="entry name" value="HD"/>
</dbReference>
<dbReference type="InterPro" id="IPR017970">
    <property type="entry name" value="Homeobox_CS"/>
</dbReference>
<dbReference type="InterPro" id="IPR009057">
    <property type="entry name" value="Homeodomain-like_sf"/>
</dbReference>
<dbReference type="InterPro" id="IPR043562">
    <property type="entry name" value="RAX/RAX2"/>
</dbReference>
<dbReference type="PANTHER" id="PTHR46271">
    <property type="entry name" value="HOMEOBOX PROTEIN, PUTATIVE-RELATED"/>
    <property type="match status" value="1"/>
</dbReference>
<dbReference type="PANTHER" id="PTHR46271:SF2">
    <property type="entry name" value="RETINA AND ANTERIOR NEURAL FOLD HOMEOBOX PROTEIN 2"/>
    <property type="match status" value="1"/>
</dbReference>
<dbReference type="Pfam" id="PF00046">
    <property type="entry name" value="Homeodomain"/>
    <property type="match status" value="1"/>
</dbReference>
<dbReference type="SMART" id="SM00389">
    <property type="entry name" value="HOX"/>
    <property type="match status" value="1"/>
</dbReference>
<dbReference type="SUPFAM" id="SSF46689">
    <property type="entry name" value="Homeodomain-like"/>
    <property type="match status" value="1"/>
</dbReference>
<dbReference type="PROSITE" id="PS00027">
    <property type="entry name" value="HOMEOBOX_1"/>
    <property type="match status" value="1"/>
</dbReference>
<dbReference type="PROSITE" id="PS50071">
    <property type="entry name" value="HOMEOBOX_2"/>
    <property type="match status" value="1"/>
</dbReference>
<organism>
    <name type="scientific">Pan troglodytes</name>
    <name type="common">Chimpanzee</name>
    <dbReference type="NCBI Taxonomy" id="9598"/>
    <lineage>
        <taxon>Eukaryota</taxon>
        <taxon>Metazoa</taxon>
        <taxon>Chordata</taxon>
        <taxon>Craniata</taxon>
        <taxon>Vertebrata</taxon>
        <taxon>Euteleostomi</taxon>
        <taxon>Mammalia</taxon>
        <taxon>Eutheria</taxon>
        <taxon>Euarchontoglires</taxon>
        <taxon>Primates</taxon>
        <taxon>Haplorrhini</taxon>
        <taxon>Catarrhini</taxon>
        <taxon>Hominidae</taxon>
        <taxon>Pan</taxon>
    </lineage>
</organism>
<sequence length="184" mass="20104">MFLSPGEGPATEGGGLGPGEEAPKKKHRRNRTTFTTYQLHQLERAFEASHYPDVYSREELAAKVHLPEVRVQVWFQNRRAKWRRQERLESGSGAVAAPRLPEAPALPFARPPAMSLPLEPWLGPGPPAVPGLPRLLGPGPGLQASFGPHAFAPTFADGFALEEASLRLLAKEHAQAMDRAWPPA</sequence>